<name>PSAB_SYNY3</name>
<comment type="function">
    <text>PsaA and PsaB bind P700, the primary electron donor of photosystem I (PSI), as well as the electron acceptors A0, A1 and FX. PSI is a plastocyanin/cytochrome c6-ferredoxin oxidoreductase, converting photonic excitation into a charge separation, which transfers an electron from the donor P700 chlorophyll pair to the spectroscopically characterized acceptors A0, A1, FX, FA and FB in turn. Oxidized P700 is reduced on the lumenal side of the thylakoid membrane by plastocyanin or cytochrome c6.</text>
</comment>
<comment type="catalytic activity">
    <reaction>
        <text>reduced [plastocyanin] + hnu + oxidized [2Fe-2S]-[ferredoxin] = oxidized [plastocyanin] + reduced [2Fe-2S]-[ferredoxin]</text>
        <dbReference type="Rhea" id="RHEA:30407"/>
        <dbReference type="Rhea" id="RHEA-COMP:10000"/>
        <dbReference type="Rhea" id="RHEA-COMP:10001"/>
        <dbReference type="Rhea" id="RHEA-COMP:10039"/>
        <dbReference type="Rhea" id="RHEA-COMP:10040"/>
        <dbReference type="ChEBI" id="CHEBI:29036"/>
        <dbReference type="ChEBI" id="CHEBI:30212"/>
        <dbReference type="ChEBI" id="CHEBI:33737"/>
        <dbReference type="ChEBI" id="CHEBI:33738"/>
        <dbReference type="ChEBI" id="CHEBI:49552"/>
        <dbReference type="EC" id="1.97.1.12"/>
    </reaction>
</comment>
<comment type="cofactor">
    <text evidence="1">PSI electron transfer chain: 5 chlorophyll a, 1 chlorophyll a', 2 phylloquinones and 3 4Fe-4S clusters. PSI core antenna: 90 chlorophyll a, 22 carotenoids, 3 phospholipids and 1 galactolipid. P700 is a chlorophyll a/chlorophyll a' dimer, A0 is one or more chlorophyll a, A1 is one or both phylloquinones and FX is a shared 4Fe-4S iron-sulfur center.</text>
</comment>
<comment type="subunit">
    <text evidence="1">The PsaA/B heterodimer binds the P700 chlorophyll special pair and subsequent electron acceptors. PSI consists of a core antenna complex that captures photons, and an electron transfer chain that converts photonic excitation into a charge separation. The cyanobacterial PSI reaction center is composed of one copy each of PsaA,B,C,D,E,F,I,J,K,L,M and X, and forms trimeric complexes (By similarity).</text>
</comment>
<comment type="subcellular location">
    <subcellularLocation>
        <location>Cellular thylakoid membrane</location>
        <topology>Multi-pass membrane protein</topology>
    </subcellularLocation>
</comment>
<comment type="similarity">
    <text evidence="6">Belongs to the PsaA/PsaB family.</text>
</comment>
<dbReference type="EC" id="1.97.1.12"/>
<dbReference type="EMBL" id="X58825">
    <property type="protein sequence ID" value="CAA41630.1"/>
    <property type="molecule type" value="Genomic_DNA"/>
</dbReference>
<dbReference type="EMBL" id="BA000022">
    <property type="protein sequence ID" value="BAA17438.1"/>
    <property type="molecule type" value="Genomic_DNA"/>
</dbReference>
<dbReference type="PIR" id="S18243">
    <property type="entry name" value="S18243"/>
</dbReference>
<dbReference type="PDB" id="4KT0">
    <property type="method" value="X-ray"/>
    <property type="resolution" value="2.80 A"/>
    <property type="chains" value="B=1-731"/>
</dbReference>
<dbReference type="PDB" id="4L6V">
    <property type="method" value="X-ray"/>
    <property type="resolution" value="3.80 A"/>
    <property type="chains" value="2/B/b=1-731"/>
</dbReference>
<dbReference type="PDB" id="6HQB">
    <property type="method" value="X-ray"/>
    <property type="resolution" value="4.00 A"/>
    <property type="chains" value="B=1-731"/>
</dbReference>
<dbReference type="PDB" id="6NWA">
    <property type="method" value="EM"/>
    <property type="resolution" value="3.48 A"/>
    <property type="chains" value="B/G/b=1-731"/>
</dbReference>
<dbReference type="PDB" id="6UZV">
    <property type="method" value="EM"/>
    <property type="resolution" value="3.10 A"/>
    <property type="chains" value="2/B/b=1-731"/>
</dbReference>
<dbReference type="PDB" id="7O1V">
    <property type="method" value="EM"/>
    <property type="resolution" value="4.31 A"/>
    <property type="chains" value="B=3-731"/>
</dbReference>
<dbReference type="PDB" id="7UMH">
    <property type="method" value="EM"/>
    <property type="resolution" value="2.60 A"/>
    <property type="chains" value="B/G/b=1-731"/>
</dbReference>
<dbReference type="PDB" id="8AM5">
    <property type="method" value="EM"/>
    <property type="resolution" value="3.10 A"/>
    <property type="chains" value="b=1-731"/>
</dbReference>
<dbReference type="PDB" id="8ASL">
    <property type="method" value="EM"/>
    <property type="resolution" value="3.15 A"/>
    <property type="chains" value="b=1-731"/>
</dbReference>
<dbReference type="PDB" id="8ASP">
    <property type="method" value="EM"/>
    <property type="resolution" value="2.90 A"/>
    <property type="chains" value="b=1-731"/>
</dbReference>
<dbReference type="PDB" id="9AU4">
    <property type="method" value="EM"/>
    <property type="resolution" value="2.03 A"/>
    <property type="chains" value="B/H/b=3-731"/>
</dbReference>
<dbReference type="PDBsum" id="4KT0"/>
<dbReference type="PDBsum" id="4L6V"/>
<dbReference type="PDBsum" id="6HQB"/>
<dbReference type="PDBsum" id="6NWA"/>
<dbReference type="PDBsum" id="6UZV"/>
<dbReference type="PDBsum" id="7O1V"/>
<dbReference type="PDBsum" id="7UMH"/>
<dbReference type="PDBsum" id="8AM5"/>
<dbReference type="PDBsum" id="8ASL"/>
<dbReference type="PDBsum" id="8ASP"/>
<dbReference type="PDBsum" id="9AU4"/>
<dbReference type="EMDB" id="EMD-0524"/>
<dbReference type="EMDB" id="EMD-12697"/>
<dbReference type="EMDB" id="EMD-15522"/>
<dbReference type="EMDB" id="EMD-15618"/>
<dbReference type="EMDB" id="EMD-15621"/>
<dbReference type="EMDB" id="EMD-20963"/>
<dbReference type="EMDB" id="EMD-26601"/>
<dbReference type="SMR" id="P29255"/>
<dbReference type="IntAct" id="P29255">
    <property type="interactions" value="3"/>
</dbReference>
<dbReference type="STRING" id="1148.gene:10498302"/>
<dbReference type="PaxDb" id="1148-1652517"/>
<dbReference type="EnsemblBacteria" id="BAA17438">
    <property type="protein sequence ID" value="BAA17438"/>
    <property type="gene ID" value="BAA17438"/>
</dbReference>
<dbReference type="KEGG" id="syn:slr1835"/>
<dbReference type="eggNOG" id="COG2885">
    <property type="taxonomic scope" value="Bacteria"/>
</dbReference>
<dbReference type="InParanoid" id="P29255"/>
<dbReference type="PhylomeDB" id="P29255"/>
<dbReference type="BioCyc" id="MetaCyc:PSAB-MONOMER"/>
<dbReference type="BRENDA" id="1.97.1.12">
    <property type="organism ID" value="6192"/>
</dbReference>
<dbReference type="EvolutionaryTrace" id="P29255"/>
<dbReference type="Proteomes" id="UP000001425">
    <property type="component" value="Chromosome"/>
</dbReference>
<dbReference type="GO" id="GO:0009522">
    <property type="term" value="C:photosystem I"/>
    <property type="evidence" value="ECO:0000314"/>
    <property type="project" value="UniProtKB"/>
</dbReference>
<dbReference type="GO" id="GO:0005886">
    <property type="term" value="C:plasma membrane"/>
    <property type="evidence" value="ECO:0000314"/>
    <property type="project" value="UniProtKB"/>
</dbReference>
<dbReference type="GO" id="GO:0031676">
    <property type="term" value="C:plasma membrane-derived thylakoid membrane"/>
    <property type="evidence" value="ECO:0007669"/>
    <property type="project" value="UniProtKB-SubCell"/>
</dbReference>
<dbReference type="GO" id="GO:0051539">
    <property type="term" value="F:4 iron, 4 sulfur cluster binding"/>
    <property type="evidence" value="ECO:0007669"/>
    <property type="project" value="UniProtKB-KW"/>
</dbReference>
<dbReference type="GO" id="GO:0016168">
    <property type="term" value="F:chlorophyll binding"/>
    <property type="evidence" value="ECO:0007669"/>
    <property type="project" value="UniProtKB-KW"/>
</dbReference>
<dbReference type="GO" id="GO:0009055">
    <property type="term" value="F:electron transfer activity"/>
    <property type="evidence" value="ECO:0007669"/>
    <property type="project" value="UniProtKB-UniRule"/>
</dbReference>
<dbReference type="GO" id="GO:0000287">
    <property type="term" value="F:magnesium ion binding"/>
    <property type="evidence" value="ECO:0007669"/>
    <property type="project" value="UniProtKB-UniRule"/>
</dbReference>
<dbReference type="GO" id="GO:0016491">
    <property type="term" value="F:oxidoreductase activity"/>
    <property type="evidence" value="ECO:0007669"/>
    <property type="project" value="UniProtKB-KW"/>
</dbReference>
<dbReference type="GO" id="GO:0015979">
    <property type="term" value="P:photosynthesis"/>
    <property type="evidence" value="ECO:0007669"/>
    <property type="project" value="UniProtKB-UniRule"/>
</dbReference>
<dbReference type="FunFam" id="1.20.1130.10:FF:000001">
    <property type="entry name" value="Photosystem I P700 chlorophyll a apoprotein A2"/>
    <property type="match status" value="1"/>
</dbReference>
<dbReference type="Gene3D" id="1.20.1130.10">
    <property type="entry name" value="Photosystem I PsaA/PsaB"/>
    <property type="match status" value="1"/>
</dbReference>
<dbReference type="HAMAP" id="MF_00482">
    <property type="entry name" value="PSI_PsaB"/>
    <property type="match status" value="1"/>
</dbReference>
<dbReference type="InterPro" id="IPR001280">
    <property type="entry name" value="PSI_PsaA/B"/>
</dbReference>
<dbReference type="InterPro" id="IPR020586">
    <property type="entry name" value="PSI_PsaA/B_CS"/>
</dbReference>
<dbReference type="InterPro" id="IPR036408">
    <property type="entry name" value="PSI_PsaA/B_sf"/>
</dbReference>
<dbReference type="InterPro" id="IPR006244">
    <property type="entry name" value="PSI_PsaB"/>
</dbReference>
<dbReference type="NCBIfam" id="TIGR01336">
    <property type="entry name" value="psaB"/>
    <property type="match status" value="1"/>
</dbReference>
<dbReference type="PANTHER" id="PTHR30128">
    <property type="entry name" value="OUTER MEMBRANE PROTEIN, OMPA-RELATED"/>
    <property type="match status" value="1"/>
</dbReference>
<dbReference type="PANTHER" id="PTHR30128:SF19">
    <property type="entry name" value="PHOTOSYSTEM I P700 CHLOROPHYLL A APOPROTEIN A1-RELATED"/>
    <property type="match status" value="1"/>
</dbReference>
<dbReference type="Pfam" id="PF00223">
    <property type="entry name" value="PsaA_PsaB"/>
    <property type="match status" value="1"/>
</dbReference>
<dbReference type="PIRSF" id="PIRSF002905">
    <property type="entry name" value="PSI_A"/>
    <property type="match status" value="1"/>
</dbReference>
<dbReference type="PRINTS" id="PR00257">
    <property type="entry name" value="PHOTSYSPSAAB"/>
</dbReference>
<dbReference type="SUPFAM" id="SSF81558">
    <property type="entry name" value="Photosystem I subunits PsaA/PsaB"/>
    <property type="match status" value="1"/>
</dbReference>
<dbReference type="PROSITE" id="PS00419">
    <property type="entry name" value="PHOTOSYSTEM_I_PSAAB"/>
    <property type="match status" value="1"/>
</dbReference>
<proteinExistence type="evidence at protein level"/>
<keyword id="KW-0002">3D-structure</keyword>
<keyword id="KW-0004">4Fe-4S</keyword>
<keyword id="KW-0148">Chlorophyll</keyword>
<keyword id="KW-0157">Chromophore</keyword>
<keyword id="KW-0903">Direct protein sequencing</keyword>
<keyword id="KW-0249">Electron transport</keyword>
<keyword id="KW-0408">Iron</keyword>
<keyword id="KW-0411">Iron-sulfur</keyword>
<keyword id="KW-0460">Magnesium</keyword>
<keyword id="KW-0472">Membrane</keyword>
<keyword id="KW-0479">Metal-binding</keyword>
<keyword id="KW-0560">Oxidoreductase</keyword>
<keyword id="KW-0602">Photosynthesis</keyword>
<keyword id="KW-0603">Photosystem I</keyword>
<keyword id="KW-1185">Reference proteome</keyword>
<keyword id="KW-0793">Thylakoid</keyword>
<keyword id="KW-0812">Transmembrane</keyword>
<keyword id="KW-1133">Transmembrane helix</keyword>
<keyword id="KW-0813">Transport</keyword>
<reference key="1">
    <citation type="journal article" date="1991" name="Plant Mol. Biol.">
        <title>Expression of photosynthesis genes in the cyanobacterium Synechocystis sp. PCC 6803: psaA-psaB and psbA transcripts accumulate in dark-grown cells.</title>
        <authorList>
            <person name="Smart L.B."/>
            <person name="McIntosh L."/>
        </authorList>
    </citation>
    <scope>NUCLEOTIDE SEQUENCE [GENOMIC DNA]</scope>
</reference>
<reference key="2">
    <citation type="journal article" date="1996" name="DNA Res.">
        <title>Sequence analysis of the genome of the unicellular cyanobacterium Synechocystis sp. strain PCC6803. II. Sequence determination of the entire genome and assignment of potential protein-coding regions.</title>
        <authorList>
            <person name="Kaneko T."/>
            <person name="Sato S."/>
            <person name="Kotani H."/>
            <person name="Tanaka A."/>
            <person name="Asamizu E."/>
            <person name="Nakamura Y."/>
            <person name="Miyajima N."/>
            <person name="Hirosawa M."/>
            <person name="Sugiura M."/>
            <person name="Sasamoto S."/>
            <person name="Kimura T."/>
            <person name="Hosouchi T."/>
            <person name="Matsuno A."/>
            <person name="Muraki A."/>
            <person name="Nakazaki N."/>
            <person name="Naruo K."/>
            <person name="Okumura S."/>
            <person name="Shimpo S."/>
            <person name="Takeuchi C."/>
            <person name="Wada T."/>
            <person name="Watanabe A."/>
            <person name="Yamada M."/>
            <person name="Yasuda M."/>
            <person name="Tabata S."/>
        </authorList>
    </citation>
    <scope>NUCLEOTIDE SEQUENCE [LARGE SCALE GENOMIC DNA]</scope>
    <source>
        <strain>ATCC 27184 / PCC 6803 / Kazusa</strain>
    </source>
</reference>
<reference key="3">
    <citation type="journal article" date="1997" name="J. Biol. Chem.">
        <title>Topography of the photosystem I core proteins of the cyanobacterium Synechocystis sp. PCC 6803.</title>
        <authorList>
            <person name="Sun J."/>
            <person name="Xu Q."/>
            <person name="Chitnis V.P."/>
            <person name="Jin P."/>
            <person name="Chitnis P.R."/>
        </authorList>
    </citation>
    <scope>PROTEIN SEQUENCE OF 2-8; 9-13; 295-300; 304-310; 449-454; 462-467 AND 498-504</scope>
    <scope>TOPOLOGY</scope>
</reference>
<reference key="4">
    <citation type="journal article" date="1993" name="Proc. Natl. Acad. Sci. U.S.A.">
        <title>Mutational analysis of the structure and biogenesis of the photosystem I reaction center in the cyanobacterium Synechocystis sp. PCC 6803.</title>
        <authorList>
            <person name="Smart L.B."/>
            <person name="Warren P.V."/>
            <person name="Golbeck J.H."/>
            <person name="McIntosh L."/>
        </authorList>
    </citation>
    <scope>MUTAGENESIS OF LEU-522; LEU-536 AND CYS-565</scope>
</reference>
<reference key="5">
    <citation type="journal article" date="1999" name="J. Biol. Chem.">
        <title>Oxidizing side of the cyanobacterial photosystem I. Evidence for interaction between the electron donor proteins and a luminal surface helix of the PsaB subunit.</title>
        <authorList>
            <person name="Sun J."/>
            <person name="Xu W."/>
            <person name="Hervas M."/>
            <person name="Navarro J.A."/>
            <person name="De La Rosa M.A."/>
            <person name="Chitnis P.R."/>
        </authorList>
    </citation>
    <scope>MUTAGENESIS OF 595-HIS-LEU-596; 600-SER--ASN-602; 609-ASN--THR-611; 614-MET--TRP-616; 622-TRP-ALA-623; 627-GLN--ILE-629; 632-TYR-ASN-633 AND 638-ASN-ASN-639</scope>
</reference>
<reference key="6">
    <citation type="journal article" date="2003" name="Eur. J. Biochem.">
        <title>Reversed-phase HPLC determination of chlorophyll a' and phylloquinone in photosystem I of oxygenic photosynthetic organisms.</title>
        <authorList>
            <person name="Nakamura A."/>
            <person name="Akai M."/>
            <person name="Yoshida E."/>
            <person name="Taki T."/>
            <person name="Watanabe T."/>
        </authorList>
    </citation>
    <scope>PRESENCE OF CHLOROPHYLL A' IN PSI</scope>
</reference>
<accession>P29255</accession>
<accession>P73398</accession>
<protein>
    <recommendedName>
        <fullName>Photosystem I P700 chlorophyll a apoprotein A2</fullName>
        <ecNumber>1.97.1.12</ecNumber>
    </recommendedName>
    <alternativeName>
        <fullName>PsaB</fullName>
    </alternativeName>
</protein>
<evidence type="ECO:0000250" key="1"/>
<evidence type="ECO:0000255" key="2"/>
<evidence type="ECO:0000269" key="3">
    <source>
    </source>
</evidence>
<evidence type="ECO:0000269" key="4">
    <source>
    </source>
</evidence>
<evidence type="ECO:0000269" key="5">
    <source>
    </source>
</evidence>
<evidence type="ECO:0000305" key="6"/>
<evidence type="ECO:0007829" key="7">
    <source>
        <dbReference type="PDB" id="4KT0"/>
    </source>
</evidence>
<evidence type="ECO:0007829" key="8">
    <source>
        <dbReference type="PDB" id="6UZV"/>
    </source>
</evidence>
<evidence type="ECO:0007829" key="9">
    <source>
        <dbReference type="PDB" id="8AM5"/>
    </source>
</evidence>
<evidence type="ECO:0007829" key="10">
    <source>
        <dbReference type="PDB" id="8ASP"/>
    </source>
</evidence>
<sequence>MATKFPKFSQDLAQDPTTRRIWYGIATAHDFETHDGMTEENLYQKIFASHFGHIAIIFLWTSGTLFHVAWQGNFEQWIKDPLNIRPIAHAIWDPHFGEGAVNAFTQAGASNPVNIAYSGVYHWFYTIGMTTNQELYSGAVFLLVLASLFLFAGWLHLQPKFRPSLAWFKNAESRLNHHLAGLFGVSSLAWAGHLVHVAIPEARGQHVGWDNFLSTPPHPAGLMPFFTGNWGVYAADPDTAGHIFGTSEGAGTAILTFLGGFHPQTESLWLTDIAHHHLAIAVIFIIAGHMYRTNWGIGHSIKEILNAHKGPLTGAGHTNLYDTINNSLHFQLGLALASLGVITSLVAQHMYSLPSYAFIAQDHTTQAALYTHHQYIAGFLMVGAFAHGAIFFVRDYDPVANKDNVLARMLEHKEALISHLSWVSLFLGFHTLGLYVHNDVVVAFGTPEKQILIEPVFAQWIQATSGKALYGFDVLLSNPDSIASTTGAAWLPGWLDAINSGTNSLFLTIGPGDFLVHHAIALGLHTTALILIKGALDARGSKLMPDKKDFGYSFPCDGPGRGGTCDISAWDAFYLAMFWMLNTLGWLTFYWHWKHLGVWSGNVAQFNENSTYLMGWFRDYLWANSAQLINGYNPYGVNNLSVWAWMFLFGHLVWATGFMFLISWRGYWQELIETIVWAHERTPLANLVRWKDKPVALSIVQARLVGLAHFTVGYVLTYAAFLIASTAGKFG</sequence>
<feature type="initiator methionine" description="Removed" evidence="5">
    <location>
        <position position="1"/>
    </location>
</feature>
<feature type="chain" id="PRO_0000088657" description="Photosystem I P700 chlorophyll a apoprotein A2">
    <location>
        <begin position="2"/>
        <end position="731"/>
    </location>
</feature>
<feature type="transmembrane region" description="Helical; Name=I" evidence="2">
    <location>
        <begin position="46"/>
        <end position="69"/>
    </location>
</feature>
<feature type="transmembrane region" description="Helical; Name=II" evidence="2">
    <location>
        <begin position="135"/>
        <end position="158"/>
    </location>
</feature>
<feature type="transmembrane region" description="Helical; Name=III" evidence="2">
    <location>
        <begin position="175"/>
        <end position="199"/>
    </location>
</feature>
<feature type="transmembrane region" description="Helical; Name=IV" evidence="2">
    <location>
        <begin position="273"/>
        <end position="291"/>
    </location>
</feature>
<feature type="transmembrane region" description="Helical; Name=V" evidence="2">
    <location>
        <begin position="328"/>
        <end position="351"/>
    </location>
</feature>
<feature type="transmembrane region" description="Helical; Name=VI" evidence="2">
    <location>
        <begin position="367"/>
        <end position="393"/>
    </location>
</feature>
<feature type="transmembrane region" description="Helical; Name=VII" evidence="2">
    <location>
        <begin position="415"/>
        <end position="437"/>
    </location>
</feature>
<feature type="transmembrane region" description="Helical; Name=VIII" evidence="2">
    <location>
        <begin position="514"/>
        <end position="532"/>
    </location>
</feature>
<feature type="transmembrane region" description="Helical; Name=IX" evidence="2">
    <location>
        <begin position="572"/>
        <end position="593"/>
    </location>
</feature>
<feature type="transmembrane region" description="Helical; Name=X" evidence="2">
    <location>
        <begin position="640"/>
        <end position="662"/>
    </location>
</feature>
<feature type="transmembrane region" description="Helical; Name=XI" evidence="2">
    <location>
        <begin position="704"/>
        <end position="724"/>
    </location>
</feature>
<feature type="binding site">
    <location>
        <position position="556"/>
    </location>
    <ligand>
        <name>[4Fe-4S] cluster</name>
        <dbReference type="ChEBI" id="CHEBI:49883"/>
        <note>ligand shared between dimeric partners</note>
    </ligand>
</feature>
<feature type="binding site">
    <location>
        <position position="565"/>
    </location>
    <ligand>
        <name>[4Fe-4S] cluster</name>
        <dbReference type="ChEBI" id="CHEBI:49883"/>
        <note>ligand shared between dimeric partners</note>
    </ligand>
</feature>
<feature type="binding site" description="axial binding residue" evidence="1">
    <location>
        <position position="651"/>
    </location>
    <ligand>
        <name>chlorophyll a</name>
        <dbReference type="ChEBI" id="CHEBI:58416"/>
        <label>B1</label>
    </ligand>
    <ligandPart>
        <name>Mg</name>
        <dbReference type="ChEBI" id="CHEBI:25107"/>
    </ligandPart>
</feature>
<feature type="binding site" description="axial binding residue" evidence="1">
    <location>
        <position position="659"/>
    </location>
    <ligand>
        <name>chlorophyll a</name>
        <dbReference type="ChEBI" id="CHEBI:58416"/>
        <label>B3</label>
    </ligand>
    <ligandPart>
        <name>Mg</name>
        <dbReference type="ChEBI" id="CHEBI:25107"/>
    </ligandPart>
</feature>
<feature type="binding site" evidence="1">
    <location>
        <position position="667"/>
    </location>
    <ligand>
        <name>chlorophyll a</name>
        <dbReference type="ChEBI" id="CHEBI:58416"/>
        <label>B3</label>
    </ligand>
</feature>
<feature type="binding site" evidence="1">
    <location>
        <position position="668"/>
    </location>
    <ligand>
        <name>phylloquinone</name>
        <dbReference type="ChEBI" id="CHEBI:18067"/>
        <label>B</label>
    </ligand>
</feature>
<feature type="mutagenesis site" description="No protein or PSI accumulate, unable to grow photoautotrophically." evidence="4">
    <original>L</original>
    <variation>P</variation>
    <location>
        <position position="522"/>
    </location>
</feature>
<feature type="mutagenesis site" description="No effect." evidence="4">
    <original>L</original>
    <variation>V</variation>
    <location>
        <position position="522"/>
    </location>
</feature>
<feature type="mutagenesis site" description="No effect." evidence="4">
    <original>L</original>
    <variation>M</variation>
    <location>
        <position position="536"/>
    </location>
</feature>
<feature type="mutagenesis site" description="Almost no protein accumulates. No PSI activity is present, unable to grow photoautotrophically." evidence="4">
    <original>C</original>
    <variation>D</variation>
    <variation>H</variation>
    <location>
        <position position="565"/>
    </location>
</feature>
<feature type="mutagenesis site" description="Accumulates some protein and PSI, still does not grow photoautotrophically." evidence="4">
    <original>C</original>
    <variation>S</variation>
    <location>
        <position position="565"/>
    </location>
</feature>
<feature type="mutagenesis site" description="PSI less stably assembled than wild-type, possible decrease in ability to accept electrons from cytochrome c6. C-594 is exposed on complex surface." evidence="3">
    <original>HL</original>
    <variation>CI</variation>
    <location>
        <begin position="595"/>
        <end position="596"/>
    </location>
</feature>
<feature type="mutagenesis site" description="No protein or PSI accumulate, unable to grow photoautotrophically." evidence="3">
    <original>SGN</original>
    <variation>RCI</variation>
    <location>
        <begin position="600"/>
        <end position="602"/>
    </location>
</feature>
<feature type="mutagenesis site" description="No protein or PSI accumulate, unable to grow photoautotrophically." evidence="3">
    <original>NST</original>
    <variation>KCI</variation>
    <location>
        <begin position="609"/>
        <end position="611"/>
    </location>
</feature>
<feature type="mutagenesis site" description="No protein or PSI accumulate, unable to grow photoautotrophically." evidence="3">
    <original>MGW</original>
    <variation>ICA</variation>
    <location>
        <begin position="614"/>
        <end position="616"/>
    </location>
</feature>
<feature type="mutagenesis site" description="Decreases PSI levels, has slow autotrophic growth, unable to accept electrons in vitro from cytochrome c6. C-621 is exposed on complex surface." evidence="3">
    <original>WA</original>
    <variation>CR</variation>
    <location>
        <begin position="622"/>
        <end position="623"/>
    </location>
</feature>
<feature type="mutagenesis site" description="Decreases PSI levels but no change in ability of complex to accept electrons from cytochrome c6. C-627 is exposed on complex surface." evidence="3">
    <original>QLI</original>
    <variation>HCS</variation>
    <location>
        <begin position="627"/>
        <end position="629"/>
    </location>
</feature>
<feature type="mutagenesis site" description="Greatly decreases levels of PSI, cells do not grow photoautotrophically. Unable to accept electrons from cytochrome c6 in vitro. C-631 is exposed on complex surface." evidence="3">
    <original>YN</original>
    <variation>CI</variation>
    <location>
        <begin position="632"/>
        <end position="633"/>
    </location>
</feature>
<feature type="mutagenesis site" description="PSI assembles less stably than in wild-type but no change in ability of complex to accept electrons from cytochrome c6. C-637 is exposed on complex surface." evidence="3">
    <original>NN</original>
    <variation>CS</variation>
    <location>
        <begin position="638"/>
        <end position="639"/>
    </location>
</feature>
<feature type="sequence conflict" description="In Ref. 3; AA sequence." evidence="6" ref="3">
    <original>T</original>
    <variation>I</variation>
    <location>
        <position position="502"/>
    </location>
</feature>
<feature type="sequence conflict" description="In Ref. 1; CAA41630." evidence="6" ref="1">
    <original>DA</original>
    <variation>ES</variation>
    <location>
        <begin position="537"/>
        <end position="538"/>
    </location>
</feature>
<feature type="helix" evidence="7">
    <location>
        <begin position="10"/>
        <end position="13"/>
    </location>
</feature>
<feature type="helix" evidence="7">
    <location>
        <begin position="19"/>
        <end position="26"/>
    </location>
</feature>
<feature type="turn" evidence="7">
    <location>
        <begin position="27"/>
        <end position="29"/>
    </location>
</feature>
<feature type="helix" evidence="7">
    <location>
        <begin position="31"/>
        <end position="33"/>
    </location>
</feature>
<feature type="helix" evidence="7">
    <location>
        <begin position="39"/>
        <end position="71"/>
    </location>
</feature>
<feature type="helix" evidence="7">
    <location>
        <begin position="74"/>
        <end position="77"/>
    </location>
</feature>
<feature type="turn" evidence="7">
    <location>
        <begin position="81"/>
        <end position="83"/>
    </location>
</feature>
<feature type="strand" evidence="7">
    <location>
        <begin position="87"/>
        <end position="90"/>
    </location>
</feature>
<feature type="helix" evidence="7">
    <location>
        <begin position="98"/>
        <end position="104"/>
    </location>
</feature>
<feature type="strand" evidence="7">
    <location>
        <begin position="113"/>
        <end position="115"/>
    </location>
</feature>
<feature type="helix" evidence="7">
    <location>
        <begin position="120"/>
        <end position="126"/>
    </location>
</feature>
<feature type="helix" evidence="7">
    <location>
        <begin position="132"/>
        <end position="155"/>
    </location>
</feature>
<feature type="turn" evidence="7">
    <location>
        <begin position="159"/>
        <end position="161"/>
    </location>
</feature>
<feature type="helix" evidence="7">
    <location>
        <begin position="165"/>
        <end position="168"/>
    </location>
</feature>
<feature type="helix" evidence="7">
    <location>
        <begin position="171"/>
        <end position="180"/>
    </location>
</feature>
<feature type="turn" evidence="7">
    <location>
        <begin position="181"/>
        <end position="183"/>
    </location>
</feature>
<feature type="helix" evidence="7">
    <location>
        <begin position="184"/>
        <end position="196"/>
    </location>
</feature>
<feature type="helix" evidence="7">
    <location>
        <begin position="198"/>
        <end position="201"/>
    </location>
</feature>
<feature type="turn" evidence="7">
    <location>
        <begin position="202"/>
        <end position="204"/>
    </location>
</feature>
<feature type="turn" evidence="7">
    <location>
        <begin position="209"/>
        <end position="211"/>
    </location>
</feature>
<feature type="helix" evidence="7">
    <location>
        <begin position="212"/>
        <end position="214"/>
    </location>
</feature>
<feature type="strand" evidence="7">
    <location>
        <begin position="217"/>
        <end position="220"/>
    </location>
</feature>
<feature type="turn" evidence="7">
    <location>
        <begin position="223"/>
        <end position="228"/>
    </location>
</feature>
<feature type="helix" evidence="7">
    <location>
        <begin position="230"/>
        <end position="234"/>
    </location>
</feature>
<feature type="turn" evidence="7">
    <location>
        <begin position="263"/>
        <end position="265"/>
    </location>
</feature>
<feature type="helix" evidence="7">
    <location>
        <begin position="270"/>
        <end position="285"/>
    </location>
</feature>
<feature type="helix" evidence="7">
    <location>
        <begin position="286"/>
        <end position="289"/>
    </location>
</feature>
<feature type="strand" evidence="7">
    <location>
        <begin position="294"/>
        <end position="296"/>
    </location>
</feature>
<feature type="helix" evidence="7">
    <location>
        <begin position="301"/>
        <end position="305"/>
    </location>
</feature>
<feature type="strand" evidence="10">
    <location>
        <begin position="311"/>
        <end position="313"/>
    </location>
</feature>
<feature type="strand" evidence="8">
    <location>
        <begin position="314"/>
        <end position="316"/>
    </location>
</feature>
<feature type="turn" evidence="7">
    <location>
        <begin position="317"/>
        <end position="319"/>
    </location>
</feature>
<feature type="helix" evidence="7">
    <location>
        <begin position="320"/>
        <end position="326"/>
    </location>
</feature>
<feature type="helix" evidence="7">
    <location>
        <begin position="328"/>
        <end position="350"/>
    </location>
</feature>
<feature type="strand" evidence="8">
    <location>
        <begin position="359"/>
        <end position="361"/>
    </location>
</feature>
<feature type="helix" evidence="7">
    <location>
        <begin position="363"/>
        <end position="394"/>
    </location>
</feature>
<feature type="turn" evidence="7">
    <location>
        <begin position="398"/>
        <end position="403"/>
    </location>
</feature>
<feature type="helix" evidence="7">
    <location>
        <begin position="405"/>
        <end position="411"/>
    </location>
</feature>
<feature type="helix" evidence="7">
    <location>
        <begin position="413"/>
        <end position="443"/>
    </location>
</feature>
<feature type="helix" evidence="7">
    <location>
        <begin position="447"/>
        <end position="449"/>
    </location>
</feature>
<feature type="helix" evidence="7">
    <location>
        <begin position="456"/>
        <end position="463"/>
    </location>
</feature>
<feature type="turn" evidence="7">
    <location>
        <begin position="464"/>
        <end position="466"/>
    </location>
</feature>
<feature type="helix" evidence="7">
    <location>
        <begin position="475"/>
        <end position="477"/>
    </location>
</feature>
<feature type="turn" evidence="7">
    <location>
        <begin position="482"/>
        <end position="487"/>
    </location>
</feature>
<feature type="helix" evidence="7">
    <location>
        <begin position="491"/>
        <end position="499"/>
    </location>
</feature>
<feature type="strand" evidence="7">
    <location>
        <begin position="503"/>
        <end position="506"/>
    </location>
</feature>
<feature type="helix" evidence="7">
    <location>
        <begin position="511"/>
        <end position="536"/>
    </location>
</feature>
<feature type="helix" evidence="7">
    <location>
        <begin position="547"/>
        <end position="549"/>
    </location>
</feature>
<feature type="helix" evidence="7">
    <location>
        <begin position="569"/>
        <end position="600"/>
    </location>
</feature>
<feature type="helix" evidence="7">
    <location>
        <begin position="604"/>
        <end position="609"/>
    </location>
</feature>
<feature type="strand" evidence="8">
    <location>
        <begin position="610"/>
        <end position="612"/>
    </location>
</feature>
<feature type="helix" evidence="7">
    <location>
        <begin position="613"/>
        <end position="619"/>
    </location>
</feature>
<feature type="turn" evidence="7">
    <location>
        <begin position="620"/>
        <end position="627"/>
    </location>
</feature>
<feature type="helix" evidence="7">
    <location>
        <begin position="628"/>
        <end position="630"/>
    </location>
</feature>
<feature type="strand" evidence="9">
    <location>
        <begin position="631"/>
        <end position="633"/>
    </location>
</feature>
<feature type="helix" evidence="7">
    <location>
        <begin position="641"/>
        <end position="662"/>
    </location>
</feature>
<feature type="helix" evidence="7">
    <location>
        <begin position="665"/>
        <end position="681"/>
    </location>
</feature>
<feature type="strand" evidence="7">
    <location>
        <begin position="682"/>
        <end position="684"/>
    </location>
</feature>
<feature type="strand" evidence="8">
    <location>
        <begin position="685"/>
        <end position="688"/>
    </location>
</feature>
<feature type="strand" evidence="7">
    <location>
        <begin position="691"/>
        <end position="693"/>
    </location>
</feature>
<feature type="helix" evidence="7">
    <location>
        <begin position="699"/>
        <end position="729"/>
    </location>
</feature>
<gene>
    <name type="primary">psaB</name>
    <name type="ordered locus">slr1835</name>
</gene>
<organism>
    <name type="scientific">Synechocystis sp. (strain ATCC 27184 / PCC 6803 / Kazusa)</name>
    <dbReference type="NCBI Taxonomy" id="1111708"/>
    <lineage>
        <taxon>Bacteria</taxon>
        <taxon>Bacillati</taxon>
        <taxon>Cyanobacteriota</taxon>
        <taxon>Cyanophyceae</taxon>
        <taxon>Synechococcales</taxon>
        <taxon>Merismopediaceae</taxon>
        <taxon>Synechocystis</taxon>
    </lineage>
</organism>